<feature type="chain" id="PRO_1000214521" description="Large ribosomal subunit protein uL3">
    <location>
        <begin position="1"/>
        <end position="351"/>
    </location>
</feature>
<feature type="region of interest" description="Disordered" evidence="2">
    <location>
        <begin position="1"/>
        <end position="31"/>
    </location>
</feature>
<feature type="region of interest" description="Disordered" evidence="2">
    <location>
        <begin position="246"/>
        <end position="271"/>
    </location>
</feature>
<proteinExistence type="inferred from homology"/>
<dbReference type="EMBL" id="CP001401">
    <property type="protein sequence ID" value="ACP55352.1"/>
    <property type="molecule type" value="Genomic_DNA"/>
</dbReference>
<dbReference type="RefSeq" id="WP_012718826.1">
    <property type="nucleotide sequence ID" value="NC_012632.1"/>
</dbReference>
<dbReference type="SMR" id="C3N5S7"/>
<dbReference type="KEGG" id="sim:M1627_1470"/>
<dbReference type="HOGENOM" id="CLU_033361_2_0_2"/>
<dbReference type="Proteomes" id="UP000002307">
    <property type="component" value="Chromosome"/>
</dbReference>
<dbReference type="GO" id="GO:0022625">
    <property type="term" value="C:cytosolic large ribosomal subunit"/>
    <property type="evidence" value="ECO:0007669"/>
    <property type="project" value="TreeGrafter"/>
</dbReference>
<dbReference type="GO" id="GO:0019843">
    <property type="term" value="F:rRNA binding"/>
    <property type="evidence" value="ECO:0007669"/>
    <property type="project" value="UniProtKB-UniRule"/>
</dbReference>
<dbReference type="GO" id="GO:0003735">
    <property type="term" value="F:structural constituent of ribosome"/>
    <property type="evidence" value="ECO:0007669"/>
    <property type="project" value="InterPro"/>
</dbReference>
<dbReference type="GO" id="GO:0006412">
    <property type="term" value="P:translation"/>
    <property type="evidence" value="ECO:0007669"/>
    <property type="project" value="UniProtKB-UniRule"/>
</dbReference>
<dbReference type="Gene3D" id="3.30.1430.10">
    <property type="match status" value="1"/>
</dbReference>
<dbReference type="Gene3D" id="4.10.960.10">
    <property type="entry name" value="Ribosomal protein L3, domain 3"/>
    <property type="match status" value="1"/>
</dbReference>
<dbReference type="Gene3D" id="2.40.30.10">
    <property type="entry name" value="Translation factors"/>
    <property type="match status" value="1"/>
</dbReference>
<dbReference type="HAMAP" id="MF_01325_A">
    <property type="entry name" value="Ribosomal_uL3_A"/>
    <property type="match status" value="1"/>
</dbReference>
<dbReference type="InterPro" id="IPR045077">
    <property type="entry name" value="L3_arc_euk"/>
</dbReference>
<dbReference type="InterPro" id="IPR044892">
    <property type="entry name" value="Ribosomal_L3_dom_3_arc_sf"/>
</dbReference>
<dbReference type="InterPro" id="IPR000597">
    <property type="entry name" value="Ribosomal_uL3"/>
</dbReference>
<dbReference type="InterPro" id="IPR019928">
    <property type="entry name" value="Ribosomal_uL3_arc"/>
</dbReference>
<dbReference type="InterPro" id="IPR019926">
    <property type="entry name" value="Ribosomal_uL3_CS"/>
</dbReference>
<dbReference type="InterPro" id="IPR009000">
    <property type="entry name" value="Transl_B-barrel_sf"/>
</dbReference>
<dbReference type="NCBIfam" id="TIGR03626">
    <property type="entry name" value="L3_arch"/>
    <property type="match status" value="1"/>
</dbReference>
<dbReference type="NCBIfam" id="NF003261">
    <property type="entry name" value="PRK04231.1"/>
    <property type="match status" value="1"/>
</dbReference>
<dbReference type="PANTHER" id="PTHR11363">
    <property type="entry name" value="60S RIBOSOMAL PROTEIN L3-RELATED"/>
    <property type="match status" value="1"/>
</dbReference>
<dbReference type="PANTHER" id="PTHR11363:SF5">
    <property type="entry name" value="LARGE RIBOSOMAL SUBUNIT PROTEIN UL3"/>
    <property type="match status" value="1"/>
</dbReference>
<dbReference type="Pfam" id="PF00297">
    <property type="entry name" value="Ribosomal_L3"/>
    <property type="match status" value="1"/>
</dbReference>
<dbReference type="SUPFAM" id="SSF50447">
    <property type="entry name" value="Translation proteins"/>
    <property type="match status" value="1"/>
</dbReference>
<dbReference type="PROSITE" id="PS00474">
    <property type="entry name" value="RIBOSOMAL_L3"/>
    <property type="match status" value="1"/>
</dbReference>
<evidence type="ECO:0000255" key="1">
    <source>
        <dbReference type="HAMAP-Rule" id="MF_01325"/>
    </source>
</evidence>
<evidence type="ECO:0000256" key="2">
    <source>
        <dbReference type="SAM" id="MobiDB-lite"/>
    </source>
</evidence>
<evidence type="ECO:0000305" key="3"/>
<comment type="function">
    <text evidence="1">One of the primary rRNA binding proteins, it binds directly near the 3'-end of the 23S rRNA, where it nucleates assembly of the 50S subunit.</text>
</comment>
<comment type="subunit">
    <text evidence="1">Part of the 50S ribosomal subunit. Forms a cluster with proteins L14 and L24e.</text>
</comment>
<comment type="similarity">
    <text evidence="1">Belongs to the universal ribosomal protein uL3 family.</text>
</comment>
<keyword id="KW-0687">Ribonucleoprotein</keyword>
<keyword id="KW-0689">Ribosomal protein</keyword>
<keyword id="KW-0694">RNA-binding</keyword>
<keyword id="KW-0699">rRNA-binding</keyword>
<name>RL3_SACI3</name>
<gene>
    <name evidence="1" type="primary">rpl3</name>
    <name type="ordered locus">M1627_1470</name>
</gene>
<organism>
    <name type="scientific">Saccharolobus islandicus (strain M.16.27)</name>
    <name type="common">Sulfolobus islandicus</name>
    <dbReference type="NCBI Taxonomy" id="427318"/>
    <lineage>
        <taxon>Archaea</taxon>
        <taxon>Thermoproteota</taxon>
        <taxon>Thermoprotei</taxon>
        <taxon>Sulfolobales</taxon>
        <taxon>Sulfolobaceae</taxon>
        <taxon>Saccharolobus</taxon>
    </lineage>
</organism>
<accession>C3N5S7</accession>
<reference key="1">
    <citation type="journal article" date="2009" name="Proc. Natl. Acad. Sci. U.S.A.">
        <title>Biogeography of the Sulfolobus islandicus pan-genome.</title>
        <authorList>
            <person name="Reno M.L."/>
            <person name="Held N.L."/>
            <person name="Fields C.J."/>
            <person name="Burke P.V."/>
            <person name="Whitaker R.J."/>
        </authorList>
    </citation>
    <scope>NUCLEOTIDE SEQUENCE [LARGE SCALE GENOMIC DNA]</scope>
    <source>
        <strain>M.16.27</strain>
    </source>
</reference>
<protein>
    <recommendedName>
        <fullName evidence="1">Large ribosomal subunit protein uL3</fullName>
    </recommendedName>
    <alternativeName>
        <fullName evidence="3">50S ribosomal protein L3</fullName>
    </alternativeName>
</protein>
<sequence length="351" mass="39476">MGHRKLASPRRGSAGLRPRKRSSELLPTPRTWPQINSPNPKLLGFVGYKVGMSHVFMIDDWPNSPTNGKEIYMPVTVLEVPPIIPLALRAYAVDGKGEPNVITEYWSPSSLQFLDITRRIRSFSSFLKNDESKKKFEEKFGSKLDLIKSNLDRIVYFRLLVATQPRKIPSLGKKVPDLVEIQIGGGEKKAQLDYALNVLGKEISIKDVFKEGQLIDVVGVTKGKGFAGVIKRYSVVELPRWHKHRKGSRKIGTRGPSLGTPSYTPQPGQLGFHRRTEYNKRIIKIGDDPKEINPAGGFVRYGIVRNTYILLEGSILGSKKRPIFLREAVRPSYVFENAPKITYVNLLSKQG</sequence>